<evidence type="ECO:0000250" key="1"/>
<dbReference type="EMBL" id="CR380953">
    <property type="protein sequence ID" value="CAG59505.1"/>
    <property type="molecule type" value="Genomic_DNA"/>
</dbReference>
<dbReference type="RefSeq" id="XP_446578.1">
    <property type="nucleotide sequence ID" value="XM_446578.1"/>
</dbReference>
<dbReference type="SMR" id="Q6FT66"/>
<dbReference type="FunCoup" id="Q6FT66">
    <property type="interactions" value="45"/>
</dbReference>
<dbReference type="STRING" id="284593.Q6FT66"/>
<dbReference type="EnsemblFungi" id="CAGL0G05005g-T">
    <property type="protein sequence ID" value="CAGL0G05005g-T-p1"/>
    <property type="gene ID" value="CAGL0G05005g"/>
</dbReference>
<dbReference type="KEGG" id="cgr:2887981"/>
<dbReference type="CGD" id="CAL0130793">
    <property type="gene designation" value="CAGL0G05005g"/>
</dbReference>
<dbReference type="VEuPathDB" id="FungiDB:B1J91_G05005g"/>
<dbReference type="VEuPathDB" id="FungiDB:CAGL0G05005g"/>
<dbReference type="eggNOG" id="ENOG502RYBU">
    <property type="taxonomic scope" value="Eukaryota"/>
</dbReference>
<dbReference type="HOGENOM" id="CLU_1273151_0_0_1"/>
<dbReference type="InParanoid" id="Q6FT66"/>
<dbReference type="Proteomes" id="UP000002428">
    <property type="component" value="Chromosome G"/>
</dbReference>
<dbReference type="GO" id="GO:0005737">
    <property type="term" value="C:cytoplasm"/>
    <property type="evidence" value="ECO:0007669"/>
    <property type="project" value="UniProtKB-SubCell"/>
</dbReference>
<dbReference type="GO" id="GO:0000184">
    <property type="term" value="P:nuclear-transcribed mRNA catabolic process, nonsense-mediated decay"/>
    <property type="evidence" value="ECO:0007669"/>
    <property type="project" value="UniProtKB-KW"/>
</dbReference>
<dbReference type="CDD" id="cd18717">
    <property type="entry name" value="PIN_ScNmd4p-like"/>
    <property type="match status" value="1"/>
</dbReference>
<dbReference type="Gene3D" id="3.40.50.1010">
    <property type="entry name" value="5'-nuclease"/>
    <property type="match status" value="1"/>
</dbReference>
<reference key="1">
    <citation type="journal article" date="2004" name="Nature">
        <title>Genome evolution in yeasts.</title>
        <authorList>
            <person name="Dujon B."/>
            <person name="Sherman D."/>
            <person name="Fischer G."/>
            <person name="Durrens P."/>
            <person name="Casaregola S."/>
            <person name="Lafontaine I."/>
            <person name="de Montigny J."/>
            <person name="Marck C."/>
            <person name="Neuveglise C."/>
            <person name="Talla E."/>
            <person name="Goffard N."/>
            <person name="Frangeul L."/>
            <person name="Aigle M."/>
            <person name="Anthouard V."/>
            <person name="Babour A."/>
            <person name="Barbe V."/>
            <person name="Barnay S."/>
            <person name="Blanchin S."/>
            <person name="Beckerich J.-M."/>
            <person name="Beyne E."/>
            <person name="Bleykasten C."/>
            <person name="Boisrame A."/>
            <person name="Boyer J."/>
            <person name="Cattolico L."/>
            <person name="Confanioleri F."/>
            <person name="de Daruvar A."/>
            <person name="Despons L."/>
            <person name="Fabre E."/>
            <person name="Fairhead C."/>
            <person name="Ferry-Dumazet H."/>
            <person name="Groppi A."/>
            <person name="Hantraye F."/>
            <person name="Hennequin C."/>
            <person name="Jauniaux N."/>
            <person name="Joyet P."/>
            <person name="Kachouri R."/>
            <person name="Kerrest A."/>
            <person name="Koszul R."/>
            <person name="Lemaire M."/>
            <person name="Lesur I."/>
            <person name="Ma L."/>
            <person name="Muller H."/>
            <person name="Nicaud J.-M."/>
            <person name="Nikolski M."/>
            <person name="Oztas S."/>
            <person name="Ozier-Kalogeropoulos O."/>
            <person name="Pellenz S."/>
            <person name="Potier S."/>
            <person name="Richard G.-F."/>
            <person name="Straub M.-L."/>
            <person name="Suleau A."/>
            <person name="Swennen D."/>
            <person name="Tekaia F."/>
            <person name="Wesolowski-Louvel M."/>
            <person name="Westhof E."/>
            <person name="Wirth B."/>
            <person name="Zeniou-Meyer M."/>
            <person name="Zivanovic Y."/>
            <person name="Bolotin-Fukuhara M."/>
            <person name="Thierry A."/>
            <person name="Bouchier C."/>
            <person name="Caudron B."/>
            <person name="Scarpelli C."/>
            <person name="Gaillardin C."/>
            <person name="Weissenbach J."/>
            <person name="Wincker P."/>
            <person name="Souciet J.-L."/>
        </authorList>
    </citation>
    <scope>NUCLEOTIDE SEQUENCE [LARGE SCALE GENOMIC DNA]</scope>
    <source>
        <strain>ATCC 2001 / BCRC 20586 / JCM 3761 / NBRC 0622 / NRRL Y-65 / CBS 138</strain>
    </source>
</reference>
<feature type="chain" id="PRO_0000096876" description="Nonsense-mediated decay protein 4">
    <location>
        <begin position="1"/>
        <end position="244"/>
    </location>
</feature>
<sequence length="244" mass="28254">MNQYNFILDASAFEKGLGNVKRWCQSNGNVDGKKNVYLRFYVPTFTLQELNFLQYRHKSFSAKEALKFIDKLETATSEGQRNHVVIGRKKEEDLRSDLELFIEFPDILDAVTWPTVLSYCTEGQATIDSLNKLPKRFKILLKSCVYKCHLEDDDRIRWILVTEDPQVRKIASQCHIPWCSIVDADSIISKDMNDRSFRDSEKFNSMMLKRGVAKSENMDGKEVIKTNFDQTVYATRGSGKLWTP</sequence>
<proteinExistence type="inferred from homology"/>
<comment type="function">
    <text evidence="1">Involved in nonsense-mediated decay of mRNAs containing premature stop codons.</text>
</comment>
<comment type="subcellular location">
    <subcellularLocation>
        <location evidence="1">Cytoplasm</location>
    </subcellularLocation>
</comment>
<organism>
    <name type="scientific">Candida glabrata (strain ATCC 2001 / BCRC 20586 / JCM 3761 / NBRC 0622 / NRRL Y-65 / CBS 138)</name>
    <name type="common">Yeast</name>
    <name type="synonym">Nakaseomyces glabratus</name>
    <dbReference type="NCBI Taxonomy" id="284593"/>
    <lineage>
        <taxon>Eukaryota</taxon>
        <taxon>Fungi</taxon>
        <taxon>Dikarya</taxon>
        <taxon>Ascomycota</taxon>
        <taxon>Saccharomycotina</taxon>
        <taxon>Saccharomycetes</taxon>
        <taxon>Saccharomycetales</taxon>
        <taxon>Saccharomycetaceae</taxon>
        <taxon>Nakaseomyces</taxon>
    </lineage>
</organism>
<protein>
    <recommendedName>
        <fullName>Nonsense-mediated decay protein 4</fullName>
    </recommendedName>
</protein>
<accession>Q6FT66</accession>
<gene>
    <name type="primary">NMD4</name>
    <name type="ordered locus">CAGL0G05005g</name>
</gene>
<keyword id="KW-0963">Cytoplasm</keyword>
<keyword id="KW-0866">Nonsense-mediated mRNA decay</keyword>
<keyword id="KW-1185">Reference proteome</keyword>
<name>NMD4_CANGA</name>